<reference key="1">
    <citation type="journal article" date="1986" name="Proc. Natl. Acad. Sci. U.S.A.">
        <title>Identification of conserved and divergent domains within the envelope gene of the acquired immunodeficiency syndrome retrovirus.</title>
        <authorList>
            <person name="Willey R.W."/>
            <person name="Rutledge R.A."/>
            <person name="Dias S."/>
            <person name="Folks T."/>
            <person name="Theodore T."/>
            <person name="Buckler C.E."/>
            <person name="Martin M.A."/>
        </authorList>
    </citation>
    <scope>NUCLEOTIDE SEQUENCE [GENOMIC RNA]</scope>
</reference>
<name>ENV_HV1Z3</name>
<sequence length="460" mass="51298">MRVKEIQRNYQHLWKWSLIILGMIMICKAIEKSWVTVYYGVPVWKDAETTLFCASDAKAYEKESHNVWATHACVPSDPSPQELVLGNVTENFNMWKNKMVEQMHEDIISLWDQSLKPCVKLTFLCVTLNCIDVKNSTNNNTEEATITNCSFKVPTELKDKTETVHTLFYKLDVVPLNVTNNSSISSTYRLINCNTSTITQACPKVSFEPIPIHYCAPAGFAILKCNDKKFNGTGPCKNVSTVQCTHGIRPVVSTQLLLNGSLSEEEVIIRSENITNNAKTIIVQLNETVKINCTRPGSDKKIRQSIRIGPGKVFYAKGGITGQAHCNITDGEWRNTLQQVAIALRRQFNNKSIIFNSSSGGDIEITTHTFNCGGEFFYCNTSELFTGIWNGTWDKNCTSTESNCTGNITLPCRIKQVVRTWQGVGQAMYAPPIEGTIRCSSNITGLLLTRDGGNGKCNSK</sequence>
<accession>P12491</accession>
<evidence type="ECO:0000250" key="1"/>
<evidence type="ECO:0000255" key="2"/>
<evidence type="ECO:0000305" key="3"/>
<keyword id="KW-0014">AIDS</keyword>
<keyword id="KW-1165">Clathrin-mediated endocytosis of virus by host</keyword>
<keyword id="KW-1015">Disulfide bond</keyword>
<keyword id="KW-1170">Fusion of virus membrane with host endosomal membrane</keyword>
<keyword id="KW-1168">Fusion of virus membrane with host membrane</keyword>
<keyword id="KW-0325">Glycoprotein</keyword>
<keyword id="KW-0945">Host-virus interaction</keyword>
<keyword id="KW-0472">Membrane</keyword>
<keyword id="KW-0732">Signal</keyword>
<keyword id="KW-1161">Viral attachment to host cell</keyword>
<keyword id="KW-1162">Viral penetration into host cytoplasm</keyword>
<keyword id="KW-0946">Virion</keyword>
<keyword id="KW-1164">Virus endocytosis by host</keyword>
<keyword id="KW-1160">Virus entry into host cell</keyword>
<comment type="subcellular location">
    <subcellularLocation>
        <location evidence="3">Virion membrane</location>
    </subcellularLocation>
</comment>
<comment type="miscellaneous">
    <text>Though this sequence contains a complete Env coding region, insertion of an extra nucleotide creates a stop codon prior to the normal termination; the authors suggest that this variation can account for the lack of infectivity of this clone.</text>
</comment>
<comment type="miscellaneous">
    <text>HIV-1 lineages are divided in three main groups, M (for Major), O (for Outlier), and N (for New, or Non-M, Non-O). The vast majority of strains found worldwide belong to the group M. Group O seems to be endemic to and largely confined to Cameroon and neighboring countries in West Central Africa, where these viruses represent a small minority of HIV-1 strains. The group N is represented by a limited number of isolates from Cameroonian persons. The group M is further subdivided in 9 clades or subtypes (A to D, F to H, J and K).</text>
</comment>
<organism>
    <name type="scientific">Human immunodeficiency virus type 1 group M subtype U (isolate Z3)</name>
    <name type="common">HIV-1</name>
    <dbReference type="NCBI Taxonomy" id="11680"/>
    <lineage>
        <taxon>Viruses</taxon>
        <taxon>Riboviria</taxon>
        <taxon>Pararnavirae</taxon>
        <taxon>Artverviricota</taxon>
        <taxon>Revtraviricetes</taxon>
        <taxon>Ortervirales</taxon>
        <taxon>Retroviridae</taxon>
        <taxon>Orthoretrovirinae</taxon>
        <taxon>Lentivirus</taxon>
        <taxon>Human immunodeficiency virus type 1</taxon>
    </lineage>
</organism>
<dbReference type="EMBL" id="K03347">
    <property type="protein sequence ID" value="AAA45372.1"/>
    <property type="molecule type" value="Genomic_RNA"/>
</dbReference>
<dbReference type="EMBL" id="K03347">
    <property type="protein sequence ID" value="AAA45373.1"/>
    <property type="molecule type" value="Genomic_RNA"/>
</dbReference>
<dbReference type="SMR" id="P12491"/>
<dbReference type="GlyCosmos" id="P12491">
    <property type="glycosylation" value="23 sites, No reported glycans"/>
</dbReference>
<dbReference type="Reactome" id="R-HSA-5621480">
    <property type="pathway name" value="Dectin-2 family"/>
</dbReference>
<dbReference type="GO" id="GO:0016020">
    <property type="term" value="C:membrane"/>
    <property type="evidence" value="ECO:0007669"/>
    <property type="project" value="UniProtKB-KW"/>
</dbReference>
<dbReference type="GO" id="GO:0019031">
    <property type="term" value="C:viral envelope"/>
    <property type="evidence" value="ECO:0007669"/>
    <property type="project" value="InterPro"/>
</dbReference>
<dbReference type="GO" id="GO:0055036">
    <property type="term" value="C:virion membrane"/>
    <property type="evidence" value="ECO:0007669"/>
    <property type="project" value="UniProtKB-SubCell"/>
</dbReference>
<dbReference type="GO" id="GO:0075512">
    <property type="term" value="P:clathrin-dependent endocytosis of virus by host cell"/>
    <property type="evidence" value="ECO:0007669"/>
    <property type="project" value="UniProtKB-KW"/>
</dbReference>
<dbReference type="GO" id="GO:0039654">
    <property type="term" value="P:fusion of virus membrane with host endosome membrane"/>
    <property type="evidence" value="ECO:0007669"/>
    <property type="project" value="UniProtKB-KW"/>
</dbReference>
<dbReference type="GO" id="GO:0019062">
    <property type="term" value="P:virion attachment to host cell"/>
    <property type="evidence" value="ECO:0007669"/>
    <property type="project" value="UniProtKB-KW"/>
</dbReference>
<dbReference type="FunFam" id="2.170.40.20:FF:000004">
    <property type="entry name" value="Envelope glycoprotein gp160"/>
    <property type="match status" value="1"/>
</dbReference>
<dbReference type="FunFam" id="2.170.40.20:FF:000007">
    <property type="entry name" value="Truncated surface protein"/>
    <property type="match status" value="1"/>
</dbReference>
<dbReference type="Gene3D" id="2.170.40.20">
    <property type="entry name" value="Human immunodeficiency virus 1, Gp160, envelope glycoprotein"/>
    <property type="match status" value="2"/>
</dbReference>
<dbReference type="InterPro" id="IPR036377">
    <property type="entry name" value="Gp120_core_sf"/>
</dbReference>
<dbReference type="InterPro" id="IPR000777">
    <property type="entry name" value="HIV1_Gp120"/>
</dbReference>
<dbReference type="Pfam" id="PF00516">
    <property type="entry name" value="GP120"/>
    <property type="match status" value="2"/>
</dbReference>
<dbReference type="SUPFAM" id="SSF56502">
    <property type="entry name" value="gp120 core"/>
    <property type="match status" value="1"/>
</dbReference>
<feature type="signal peptide" evidence="1">
    <location>
        <begin position="1"/>
        <end position="31"/>
    </location>
</feature>
<feature type="chain" id="PRO_0000038379" description="Truncated surface protein">
    <location>
        <begin position="32"/>
        <end position="460"/>
    </location>
</feature>
<feature type="region of interest" description="V1">
    <location>
        <begin position="130"/>
        <end position="148"/>
    </location>
</feature>
<feature type="region of interest" description="V2">
    <location>
        <begin position="149"/>
        <end position="193"/>
    </location>
</feature>
<feature type="region of interest" description="V3">
    <location>
        <begin position="293"/>
        <end position="325"/>
    </location>
</feature>
<feature type="region of interest" description="CD4-binding loop" evidence="1">
    <location>
        <begin position="358"/>
        <end position="368"/>
    </location>
</feature>
<feature type="region of interest" description="V4">
    <location>
        <begin position="379"/>
        <end position="412"/>
    </location>
</feature>
<feature type="glycosylation site" description="N-linked (GlcNAc...) asparagine; by host" evidence="2">
    <location>
        <position position="87"/>
    </location>
</feature>
<feature type="glycosylation site" description="N-linked (GlcNAc...) asparagine; by host" evidence="2">
    <location>
        <position position="135"/>
    </location>
</feature>
<feature type="glycosylation site" description="N-linked (GlcNAc...) asparagine; by host" evidence="2">
    <location>
        <position position="139"/>
    </location>
</feature>
<feature type="glycosylation site" description="N-linked (GlcNAc...) asparagine; by host" evidence="2">
    <location>
        <position position="148"/>
    </location>
</feature>
<feature type="glycosylation site" description="N-linked (GlcNAc...) asparagine; by host" evidence="2">
    <location>
        <position position="177"/>
    </location>
</feature>
<feature type="glycosylation site" description="N-linked (GlcNAc...) asparagine; by host" evidence="2">
    <location>
        <position position="180"/>
    </location>
</feature>
<feature type="glycosylation site" description="N-linked (GlcNAc...) asparagine; by host" evidence="2">
    <location>
        <position position="181"/>
    </location>
</feature>
<feature type="glycosylation site" description="N-linked (GlcNAc...) asparagine; by host" evidence="2">
    <location>
        <position position="194"/>
    </location>
</feature>
<feature type="glycosylation site" description="N-linked (GlcNAc...) asparagine; by host" evidence="2">
    <location>
        <position position="231"/>
    </location>
</feature>
<feature type="glycosylation site" description="N-linked (GlcNAc...) asparagine; by host" evidence="2">
    <location>
        <position position="238"/>
    </location>
</feature>
<feature type="glycosylation site" description="N-linked (GlcNAc...) asparagine; by host" evidence="2">
    <location>
        <position position="259"/>
    </location>
</feature>
<feature type="glycosylation site" description="N-linked (GlcNAc...) asparagine; by host" evidence="2">
    <location>
        <position position="273"/>
    </location>
</feature>
<feature type="glycosylation site" description="N-linked (GlcNAc...) asparagine; by host" evidence="2">
    <location>
        <position position="286"/>
    </location>
</feature>
<feature type="glycosylation site" description="N-linked (GlcNAc...) asparagine; by host" evidence="2">
    <location>
        <position position="292"/>
    </location>
</feature>
<feature type="glycosylation site" description="N-linked (GlcNAc...) asparagine; by host" evidence="2">
    <location>
        <position position="327"/>
    </location>
</feature>
<feature type="glycosylation site" description="N-linked (GlcNAc...) asparagine; by host" evidence="2">
    <location>
        <position position="350"/>
    </location>
</feature>
<feature type="glycosylation site" description="N-linked (GlcNAc...) asparagine; by host" evidence="2">
    <location>
        <position position="356"/>
    </location>
</feature>
<feature type="glycosylation site" description="N-linked (GlcNAc...) asparagine; by host" evidence="2">
    <location>
        <position position="380"/>
    </location>
</feature>
<feature type="glycosylation site" description="N-linked (GlcNAc...) asparagine; by host" evidence="2">
    <location>
        <position position="390"/>
    </location>
</feature>
<feature type="glycosylation site" description="N-linked (GlcNAc...) asparagine; by host" evidence="2">
    <location>
        <position position="396"/>
    </location>
</feature>
<feature type="glycosylation site" description="N-linked (GlcNAc...) asparagine; by host" evidence="2">
    <location>
        <position position="403"/>
    </location>
</feature>
<feature type="glycosylation site" description="N-linked (GlcNAc...) asparagine; by host" evidence="2">
    <location>
        <position position="407"/>
    </location>
</feature>
<feature type="glycosylation site" description="N-linked (GlcNAc...) asparagine; by host" evidence="2">
    <location>
        <position position="442"/>
    </location>
</feature>
<feature type="disulfide bond" evidence="1">
    <location>
        <begin position="53"/>
        <end position="73"/>
    </location>
</feature>
<feature type="disulfide bond" evidence="1">
    <location>
        <begin position="118"/>
        <end position="202"/>
    </location>
</feature>
<feature type="disulfide bond" evidence="1">
    <location>
        <begin position="125"/>
        <end position="193"/>
    </location>
</feature>
<feature type="disulfide bond" evidence="1">
    <location>
        <begin position="130"/>
        <end position="149"/>
    </location>
</feature>
<feature type="disulfide bond" evidence="1">
    <location>
        <begin position="215"/>
        <end position="244"/>
    </location>
</feature>
<feature type="disulfide bond" evidence="1">
    <location>
        <begin position="225"/>
        <end position="236"/>
    </location>
</feature>
<feature type="disulfide bond" evidence="1">
    <location>
        <begin position="293"/>
        <end position="326"/>
    </location>
</feature>
<feature type="disulfide bond" evidence="1">
    <location>
        <begin position="372"/>
        <end position="439"/>
    </location>
</feature>
<feature type="disulfide bond" evidence="1">
    <location>
        <begin position="379"/>
        <end position="412"/>
    </location>
</feature>
<feature type="disulfide bond" evidence="1">
    <location>
        <begin position="397"/>
        <end position="404"/>
    </location>
</feature>
<protein>
    <recommendedName>
        <fullName>Truncated surface protein</fullName>
        <shortName>SU</shortName>
    </recommendedName>
    <alternativeName>
        <fullName>Glycoprotein 120</fullName>
        <shortName>gp120</shortName>
    </alternativeName>
</protein>
<organismHost>
    <name type="scientific">Homo sapiens</name>
    <name type="common">Human</name>
    <dbReference type="NCBI Taxonomy" id="9606"/>
</organismHost>
<proteinExistence type="inferred from homology"/>
<gene>
    <name type="primary">env</name>
</gene>